<organism>
    <name type="scientific">Drosophila sechellia</name>
    <name type="common">Fruit fly</name>
    <dbReference type="NCBI Taxonomy" id="7238"/>
    <lineage>
        <taxon>Eukaryota</taxon>
        <taxon>Metazoa</taxon>
        <taxon>Ecdysozoa</taxon>
        <taxon>Arthropoda</taxon>
        <taxon>Hexapoda</taxon>
        <taxon>Insecta</taxon>
        <taxon>Pterygota</taxon>
        <taxon>Neoptera</taxon>
        <taxon>Endopterygota</taxon>
        <taxon>Diptera</taxon>
        <taxon>Brachycera</taxon>
        <taxon>Muscomorpha</taxon>
        <taxon>Ephydroidea</taxon>
        <taxon>Drosophilidae</taxon>
        <taxon>Drosophila</taxon>
        <taxon>Sophophora</taxon>
    </lineage>
</organism>
<name>TOTB_DROSE</name>
<feature type="signal peptide" evidence="2">
    <location>
        <begin position="1"/>
        <end position="21"/>
    </location>
</feature>
<feature type="chain" id="PRO_0000354981" description="Protein Turandot B">
    <location>
        <begin position="22"/>
        <end position="139"/>
    </location>
</feature>
<keyword id="KW-0391">Immunity</keyword>
<keyword id="KW-0399">Innate immunity</keyword>
<keyword id="KW-1185">Reference proteome</keyword>
<keyword id="KW-0964">Secreted</keyword>
<keyword id="KW-0732">Signal</keyword>
<accession>B4II56</accession>
<gene>
    <name evidence="1" type="primary">TotB</name>
    <name type="ORF">GM23145</name>
</gene>
<evidence type="ECO:0000250" key="1">
    <source>
        <dbReference type="UniProtKB" id="Q9VDH4"/>
    </source>
</evidence>
<evidence type="ECO:0000255" key="2"/>
<evidence type="ECO:0000312" key="3">
    <source>
        <dbReference type="EMBL" id="EDW49600.1"/>
    </source>
</evidence>
<protein>
    <recommendedName>
        <fullName>Protein Turandot B</fullName>
    </recommendedName>
</protein>
<proteinExistence type="inferred from homology"/>
<reference evidence="3" key="1">
    <citation type="journal article" date="2007" name="Nature">
        <title>Evolution of genes and genomes on the Drosophila phylogeny.</title>
        <authorList>
            <consortium name="Drosophila 12 genomes consortium"/>
        </authorList>
    </citation>
    <scope>NUCLEOTIDE SEQUENCE [LARGE SCALE GENOMIC DNA]</scope>
    <source>
        <strain evidence="3">Rob3c / Tucson 14021-0248.25</strain>
    </source>
</reference>
<dbReference type="EMBL" id="CH480842">
    <property type="protein sequence ID" value="EDW49600.1"/>
    <property type="molecule type" value="Genomic_DNA"/>
</dbReference>
<dbReference type="SMR" id="B4II56"/>
<dbReference type="STRING" id="7238.B4II56"/>
<dbReference type="EnsemblMetazoa" id="FBtr0206130">
    <property type="protein sequence ID" value="FBpp0204622"/>
    <property type="gene ID" value="FBgn0178013"/>
</dbReference>
<dbReference type="EnsemblMetazoa" id="XM_002043380.2">
    <property type="protein sequence ID" value="XP_002043416.1"/>
    <property type="gene ID" value="LOC6619194"/>
</dbReference>
<dbReference type="GeneID" id="6619194"/>
<dbReference type="KEGG" id="dse:6619194"/>
<dbReference type="HOGENOM" id="CLU_152780_0_0_1"/>
<dbReference type="OMA" id="CSAYSNQ"/>
<dbReference type="OrthoDB" id="60450at7215"/>
<dbReference type="PhylomeDB" id="B4II56"/>
<dbReference type="Proteomes" id="UP000001292">
    <property type="component" value="Unassembled WGS sequence"/>
</dbReference>
<dbReference type="GO" id="GO:0005615">
    <property type="term" value="C:extracellular space"/>
    <property type="evidence" value="ECO:0000250"/>
    <property type="project" value="UniProtKB"/>
</dbReference>
<dbReference type="GO" id="GO:0034605">
    <property type="term" value="P:cellular response to heat"/>
    <property type="evidence" value="ECO:0007669"/>
    <property type="project" value="EnsemblMetazoa"/>
</dbReference>
<dbReference type="GO" id="GO:0034644">
    <property type="term" value="P:cellular response to UV"/>
    <property type="evidence" value="ECO:0007669"/>
    <property type="project" value="EnsemblMetazoa"/>
</dbReference>
<dbReference type="GO" id="GO:0045087">
    <property type="term" value="P:innate immune response"/>
    <property type="evidence" value="ECO:0007669"/>
    <property type="project" value="UniProtKB-KW"/>
</dbReference>
<dbReference type="GO" id="GO:0009617">
    <property type="term" value="P:response to bacterium"/>
    <property type="evidence" value="ECO:0007669"/>
    <property type="project" value="EnsemblMetazoa"/>
</dbReference>
<dbReference type="GO" id="GO:0009408">
    <property type="term" value="P:response to heat"/>
    <property type="evidence" value="ECO:0000250"/>
    <property type="project" value="UniProtKB"/>
</dbReference>
<dbReference type="GO" id="GO:0009411">
    <property type="term" value="P:response to UV"/>
    <property type="evidence" value="ECO:0000250"/>
    <property type="project" value="UniProtKB"/>
</dbReference>
<dbReference type="InterPro" id="IPR010825">
    <property type="entry name" value="Turandot"/>
</dbReference>
<dbReference type="Pfam" id="PF07240">
    <property type="entry name" value="Turandot"/>
    <property type="match status" value="1"/>
</dbReference>
<sequence length="139" mass="15640">MNFKTALICFALLLIGTLCSAYSNQERQRDSRRVAEIMRTSLDDNTKINRIQELLTIYNRMAPSLRPDERARIDRFISRHTEGIIVDGVPSQGGARKIFKKTLSPAAKSVATGFFTELGASLASLFTSWFPTTTTERNH</sequence>
<comment type="function">
    <text evidence="1">A humoral factor that may play a role in stress tolerance.</text>
</comment>
<comment type="subcellular location">
    <subcellularLocation>
        <location evidence="1">Secreted</location>
    </subcellularLocation>
</comment>
<comment type="similarity">
    <text evidence="2">Belongs to the Turandot family.</text>
</comment>